<feature type="chain" id="PRO_0000092302" description="Sulfate/thiosulfate import ATP-binding protein CysA">
    <location>
        <begin position="1"/>
        <end position="348"/>
    </location>
</feature>
<feature type="domain" description="ABC transporter" evidence="1">
    <location>
        <begin position="3"/>
        <end position="237"/>
    </location>
</feature>
<feature type="binding site" evidence="1">
    <location>
        <begin position="35"/>
        <end position="42"/>
    </location>
    <ligand>
        <name>ATP</name>
        <dbReference type="ChEBI" id="CHEBI:30616"/>
    </ligand>
</feature>
<protein>
    <recommendedName>
        <fullName evidence="1">Sulfate/thiosulfate import ATP-binding protein CysA</fullName>
        <ecNumber evidence="1">7.3.2.3</ecNumber>
    </recommendedName>
    <alternativeName>
        <fullName evidence="1">Sulfate-transporting ATPase</fullName>
    </alternativeName>
</protein>
<accession>Q9PDN2</accession>
<keyword id="KW-0067">ATP-binding</keyword>
<keyword id="KW-0997">Cell inner membrane</keyword>
<keyword id="KW-1003">Cell membrane</keyword>
<keyword id="KW-0472">Membrane</keyword>
<keyword id="KW-0547">Nucleotide-binding</keyword>
<keyword id="KW-0764">Sulfate transport</keyword>
<keyword id="KW-1278">Translocase</keyword>
<keyword id="KW-0813">Transport</keyword>
<name>CYSA_XYLFA</name>
<organism>
    <name type="scientific">Xylella fastidiosa (strain 9a5c)</name>
    <dbReference type="NCBI Taxonomy" id="160492"/>
    <lineage>
        <taxon>Bacteria</taxon>
        <taxon>Pseudomonadati</taxon>
        <taxon>Pseudomonadota</taxon>
        <taxon>Gammaproteobacteria</taxon>
        <taxon>Lysobacterales</taxon>
        <taxon>Lysobacteraceae</taxon>
        <taxon>Xylella</taxon>
    </lineage>
</organism>
<evidence type="ECO:0000255" key="1">
    <source>
        <dbReference type="HAMAP-Rule" id="MF_01701"/>
    </source>
</evidence>
<sequence>MGIRIQELCKQFEDFTALAGIDLDIRQGELLALLGPSGSGKTTLLRIIAGLEHADAGRVLFGDEDATMMSVQARRVGFVFQHYALFKHMSVYENVAFGLRVRRGKARWPESQISARVFELLSLVQLDGLEQRYPMQLSGGQRQRVALARALAIEPRVLLLDEPFGALDAQVRRDLRRWLREIHDRTGLTTVFVTHDQEEALELADRVAILNQGRIEQVASPAEVYNRPSSPFVYSFVGAVNRLPGCVGADGLEVAGIVLSCPPQLSGWGAVDLYVRPEDLVLDAQEGWLAIVLWSQRSGPRMRVRARLEHSAHEVEIELSSATDEYVEGQKLRLIPRHYGVFFSESGG</sequence>
<comment type="function">
    <text evidence="1">Part of the ABC transporter complex CysAWTP involved in sulfate/thiosulfate import. Responsible for energy coupling to the transport system.</text>
</comment>
<comment type="catalytic activity">
    <reaction evidence="1">
        <text>sulfate(out) + ATP + H2O = sulfate(in) + ADP + phosphate + H(+)</text>
        <dbReference type="Rhea" id="RHEA:10192"/>
        <dbReference type="ChEBI" id="CHEBI:15377"/>
        <dbReference type="ChEBI" id="CHEBI:15378"/>
        <dbReference type="ChEBI" id="CHEBI:16189"/>
        <dbReference type="ChEBI" id="CHEBI:30616"/>
        <dbReference type="ChEBI" id="CHEBI:43474"/>
        <dbReference type="ChEBI" id="CHEBI:456216"/>
        <dbReference type="EC" id="7.3.2.3"/>
    </reaction>
</comment>
<comment type="catalytic activity">
    <reaction evidence="1">
        <text>thiosulfate(out) + ATP + H2O = thiosulfate(in) + ADP + phosphate + H(+)</text>
        <dbReference type="Rhea" id="RHEA:29871"/>
        <dbReference type="ChEBI" id="CHEBI:15377"/>
        <dbReference type="ChEBI" id="CHEBI:15378"/>
        <dbReference type="ChEBI" id="CHEBI:30616"/>
        <dbReference type="ChEBI" id="CHEBI:33542"/>
        <dbReference type="ChEBI" id="CHEBI:43474"/>
        <dbReference type="ChEBI" id="CHEBI:456216"/>
        <dbReference type="EC" id="7.3.2.3"/>
    </reaction>
</comment>
<comment type="subunit">
    <text evidence="1">The complex is composed of two ATP-binding proteins (CysA), two transmembrane proteins (CysT and CysW) and a solute-binding protein (CysP).</text>
</comment>
<comment type="subcellular location">
    <subcellularLocation>
        <location evidence="1">Cell inner membrane</location>
        <topology evidence="1">Peripheral membrane protein</topology>
    </subcellularLocation>
</comment>
<comment type="similarity">
    <text evidence="1">Belongs to the ABC transporter superfamily. Sulfate/tungstate importer (TC 3.A.1.6) family.</text>
</comment>
<dbReference type="EC" id="7.3.2.3" evidence="1"/>
<dbReference type="EMBL" id="AE003849">
    <property type="protein sequence ID" value="AAF84156.1"/>
    <property type="molecule type" value="Genomic_DNA"/>
</dbReference>
<dbReference type="PIR" id="H82694">
    <property type="entry name" value="H82694"/>
</dbReference>
<dbReference type="RefSeq" id="WP_010893851.1">
    <property type="nucleotide sequence ID" value="NC_002488.3"/>
</dbReference>
<dbReference type="SMR" id="Q9PDN2"/>
<dbReference type="STRING" id="160492.XF_1347"/>
<dbReference type="KEGG" id="xfa:XF_1347"/>
<dbReference type="eggNOG" id="COG1118">
    <property type="taxonomic scope" value="Bacteria"/>
</dbReference>
<dbReference type="HOGENOM" id="CLU_000604_1_1_6"/>
<dbReference type="Proteomes" id="UP000000812">
    <property type="component" value="Chromosome"/>
</dbReference>
<dbReference type="GO" id="GO:0043190">
    <property type="term" value="C:ATP-binding cassette (ABC) transporter complex"/>
    <property type="evidence" value="ECO:0007669"/>
    <property type="project" value="InterPro"/>
</dbReference>
<dbReference type="GO" id="GO:0015419">
    <property type="term" value="F:ABC-type sulfate transporter activity"/>
    <property type="evidence" value="ECO:0007669"/>
    <property type="project" value="InterPro"/>
</dbReference>
<dbReference type="GO" id="GO:0102025">
    <property type="term" value="F:ABC-type thiosulfate transporter activity"/>
    <property type="evidence" value="ECO:0007669"/>
    <property type="project" value="RHEA"/>
</dbReference>
<dbReference type="GO" id="GO:0005524">
    <property type="term" value="F:ATP binding"/>
    <property type="evidence" value="ECO:0007669"/>
    <property type="project" value="UniProtKB-KW"/>
</dbReference>
<dbReference type="GO" id="GO:0016887">
    <property type="term" value="F:ATP hydrolysis activity"/>
    <property type="evidence" value="ECO:0007669"/>
    <property type="project" value="InterPro"/>
</dbReference>
<dbReference type="CDD" id="cd03296">
    <property type="entry name" value="ABC_CysA_sulfate_importer"/>
    <property type="match status" value="1"/>
</dbReference>
<dbReference type="FunFam" id="3.40.50.300:FF:000425">
    <property type="entry name" value="Probable ABC transporter, ATP-binding subunit"/>
    <property type="match status" value="1"/>
</dbReference>
<dbReference type="Gene3D" id="3.40.50.300">
    <property type="entry name" value="P-loop containing nucleotide triphosphate hydrolases"/>
    <property type="match status" value="1"/>
</dbReference>
<dbReference type="InterPro" id="IPR003593">
    <property type="entry name" value="AAA+_ATPase"/>
</dbReference>
<dbReference type="InterPro" id="IPR050093">
    <property type="entry name" value="ABC_SmlMolc_Importer"/>
</dbReference>
<dbReference type="InterPro" id="IPR003439">
    <property type="entry name" value="ABC_transporter-like_ATP-bd"/>
</dbReference>
<dbReference type="InterPro" id="IPR017871">
    <property type="entry name" value="ABC_transporter-like_CS"/>
</dbReference>
<dbReference type="InterPro" id="IPR008995">
    <property type="entry name" value="Mo/tungstate-bd_C_term_dom"/>
</dbReference>
<dbReference type="InterPro" id="IPR027417">
    <property type="entry name" value="P-loop_NTPase"/>
</dbReference>
<dbReference type="InterPro" id="IPR005666">
    <property type="entry name" value="Sulph_transpt1"/>
</dbReference>
<dbReference type="NCBIfam" id="TIGR00968">
    <property type="entry name" value="3a0106s01"/>
    <property type="match status" value="1"/>
</dbReference>
<dbReference type="PANTHER" id="PTHR42781">
    <property type="entry name" value="SPERMIDINE/PUTRESCINE IMPORT ATP-BINDING PROTEIN POTA"/>
    <property type="match status" value="1"/>
</dbReference>
<dbReference type="PANTHER" id="PTHR42781:SF4">
    <property type="entry name" value="SPERMIDINE_PUTRESCINE IMPORT ATP-BINDING PROTEIN POTA"/>
    <property type="match status" value="1"/>
</dbReference>
<dbReference type="Pfam" id="PF00005">
    <property type="entry name" value="ABC_tran"/>
    <property type="match status" value="1"/>
</dbReference>
<dbReference type="SMART" id="SM00382">
    <property type="entry name" value="AAA"/>
    <property type="match status" value="1"/>
</dbReference>
<dbReference type="SUPFAM" id="SSF50331">
    <property type="entry name" value="MOP-like"/>
    <property type="match status" value="1"/>
</dbReference>
<dbReference type="SUPFAM" id="SSF52540">
    <property type="entry name" value="P-loop containing nucleoside triphosphate hydrolases"/>
    <property type="match status" value="1"/>
</dbReference>
<dbReference type="PROSITE" id="PS00211">
    <property type="entry name" value="ABC_TRANSPORTER_1"/>
    <property type="match status" value="1"/>
</dbReference>
<dbReference type="PROSITE" id="PS50893">
    <property type="entry name" value="ABC_TRANSPORTER_2"/>
    <property type="match status" value="1"/>
</dbReference>
<dbReference type="PROSITE" id="PS51237">
    <property type="entry name" value="CYSA"/>
    <property type="match status" value="1"/>
</dbReference>
<gene>
    <name evidence="1" type="primary">cysA</name>
    <name type="ordered locus">XF_1347</name>
</gene>
<reference key="1">
    <citation type="journal article" date="2000" name="Nature">
        <title>The genome sequence of the plant pathogen Xylella fastidiosa.</title>
        <authorList>
            <person name="Simpson A.J.G."/>
            <person name="Reinach F.C."/>
            <person name="Arruda P."/>
            <person name="Abreu F.A."/>
            <person name="Acencio M."/>
            <person name="Alvarenga R."/>
            <person name="Alves L.M.C."/>
            <person name="Araya J.E."/>
            <person name="Baia G.S."/>
            <person name="Baptista C.S."/>
            <person name="Barros M.H."/>
            <person name="Bonaccorsi E.D."/>
            <person name="Bordin S."/>
            <person name="Bove J.M."/>
            <person name="Briones M.R.S."/>
            <person name="Bueno M.R.P."/>
            <person name="Camargo A.A."/>
            <person name="Camargo L.E.A."/>
            <person name="Carraro D.M."/>
            <person name="Carrer H."/>
            <person name="Colauto N.B."/>
            <person name="Colombo C."/>
            <person name="Costa F.F."/>
            <person name="Costa M.C.R."/>
            <person name="Costa-Neto C.M."/>
            <person name="Coutinho L.L."/>
            <person name="Cristofani M."/>
            <person name="Dias-Neto E."/>
            <person name="Docena C."/>
            <person name="El-Dorry H."/>
            <person name="Facincani A.P."/>
            <person name="Ferreira A.J.S."/>
            <person name="Ferreira V.C.A."/>
            <person name="Ferro J.A."/>
            <person name="Fraga J.S."/>
            <person name="Franca S.C."/>
            <person name="Franco M.C."/>
            <person name="Frohme M."/>
            <person name="Furlan L.R."/>
            <person name="Garnier M."/>
            <person name="Goldman G.H."/>
            <person name="Goldman M.H.S."/>
            <person name="Gomes S.L."/>
            <person name="Gruber A."/>
            <person name="Ho P.L."/>
            <person name="Hoheisel J.D."/>
            <person name="Junqueira M.L."/>
            <person name="Kemper E.L."/>
            <person name="Kitajima J.P."/>
            <person name="Krieger J.E."/>
            <person name="Kuramae E.E."/>
            <person name="Laigret F."/>
            <person name="Lambais M.R."/>
            <person name="Leite L.C.C."/>
            <person name="Lemos E.G.M."/>
            <person name="Lemos M.V.F."/>
            <person name="Lopes S.A."/>
            <person name="Lopes C.R."/>
            <person name="Machado J.A."/>
            <person name="Machado M.A."/>
            <person name="Madeira A.M.B.N."/>
            <person name="Madeira H.M.F."/>
            <person name="Marino C.L."/>
            <person name="Marques M.V."/>
            <person name="Martins E.A.L."/>
            <person name="Martins E.M.F."/>
            <person name="Matsukuma A.Y."/>
            <person name="Menck C.F.M."/>
            <person name="Miracca E.C."/>
            <person name="Miyaki C.Y."/>
            <person name="Monteiro-Vitorello C.B."/>
            <person name="Moon D.H."/>
            <person name="Nagai M.A."/>
            <person name="Nascimento A.L.T.O."/>
            <person name="Netto L.E.S."/>
            <person name="Nhani A. Jr."/>
            <person name="Nobrega F.G."/>
            <person name="Nunes L.R."/>
            <person name="Oliveira M.A."/>
            <person name="de Oliveira M.C."/>
            <person name="de Oliveira R.C."/>
            <person name="Palmieri D.A."/>
            <person name="Paris A."/>
            <person name="Peixoto B.R."/>
            <person name="Pereira G.A.G."/>
            <person name="Pereira H.A. Jr."/>
            <person name="Pesquero J.B."/>
            <person name="Quaggio R.B."/>
            <person name="Roberto P.G."/>
            <person name="Rodrigues V."/>
            <person name="de Rosa A.J.M."/>
            <person name="de Rosa V.E. Jr."/>
            <person name="de Sa R.G."/>
            <person name="Santelli R.V."/>
            <person name="Sawasaki H.E."/>
            <person name="da Silva A.C.R."/>
            <person name="da Silva A.M."/>
            <person name="da Silva F.R."/>
            <person name="Silva W.A. Jr."/>
            <person name="da Silveira J.F."/>
            <person name="Silvestri M.L.Z."/>
            <person name="Siqueira W.J."/>
            <person name="de Souza A.A."/>
            <person name="de Souza A.P."/>
            <person name="Terenzi M.F."/>
            <person name="Truffi D."/>
            <person name="Tsai S.M."/>
            <person name="Tsuhako M.H."/>
            <person name="Vallada H."/>
            <person name="Van Sluys M.A."/>
            <person name="Verjovski-Almeida S."/>
            <person name="Vettore A.L."/>
            <person name="Zago M.A."/>
            <person name="Zatz M."/>
            <person name="Meidanis J."/>
            <person name="Setubal J.C."/>
        </authorList>
    </citation>
    <scope>NUCLEOTIDE SEQUENCE [LARGE SCALE GENOMIC DNA]</scope>
    <source>
        <strain>9a5c</strain>
    </source>
</reference>
<proteinExistence type="inferred from homology"/>